<name>RL15_XYLFA</name>
<organism>
    <name type="scientific">Xylella fastidiosa (strain 9a5c)</name>
    <dbReference type="NCBI Taxonomy" id="160492"/>
    <lineage>
        <taxon>Bacteria</taxon>
        <taxon>Pseudomonadati</taxon>
        <taxon>Pseudomonadota</taxon>
        <taxon>Gammaproteobacteria</taxon>
        <taxon>Lysobacterales</taxon>
        <taxon>Lysobacteraceae</taxon>
        <taxon>Xylella</taxon>
    </lineage>
</organism>
<keyword id="KW-0687">Ribonucleoprotein</keyword>
<keyword id="KW-0689">Ribosomal protein</keyword>
<keyword id="KW-0694">RNA-binding</keyword>
<keyword id="KW-0699">rRNA-binding</keyword>
<sequence>MIMSLRLNDLKPALGASSCRARVGRGIGSGLGKTAGRGHKGSFARKGGGKIKPGFEGGQTPMQRRLPKIGFRSRSVANTAEVLSYKLDNLEPGEIDFASLRLAKLVPSTAKKAKIVKKGRLTKVFVLKGIESTAGARAMIETTGGSFQE</sequence>
<comment type="function">
    <text evidence="1">Binds to the 23S rRNA.</text>
</comment>
<comment type="subunit">
    <text evidence="1">Part of the 50S ribosomal subunit.</text>
</comment>
<comment type="similarity">
    <text evidence="1">Belongs to the universal ribosomal protein uL15 family.</text>
</comment>
<gene>
    <name evidence="1" type="primary">rplO</name>
    <name type="ordered locus">XF_1171</name>
</gene>
<protein>
    <recommendedName>
        <fullName evidence="1">Large ribosomal subunit protein uL15</fullName>
    </recommendedName>
    <alternativeName>
        <fullName evidence="3">50S ribosomal protein L15</fullName>
    </alternativeName>
</protein>
<accession>Q9PE57</accession>
<proteinExistence type="inferred from homology"/>
<dbReference type="EMBL" id="AE003849">
    <property type="protein sequence ID" value="AAF83981.1"/>
    <property type="molecule type" value="Genomic_DNA"/>
</dbReference>
<dbReference type="PIR" id="D82714">
    <property type="entry name" value="D82714"/>
</dbReference>
<dbReference type="SMR" id="Q9PE57"/>
<dbReference type="STRING" id="160492.XF_1171"/>
<dbReference type="KEGG" id="xfa:XF_1171"/>
<dbReference type="eggNOG" id="COG0200">
    <property type="taxonomic scope" value="Bacteria"/>
</dbReference>
<dbReference type="HOGENOM" id="CLU_055188_4_2_6"/>
<dbReference type="Proteomes" id="UP000000812">
    <property type="component" value="Chromosome"/>
</dbReference>
<dbReference type="GO" id="GO:0022625">
    <property type="term" value="C:cytosolic large ribosomal subunit"/>
    <property type="evidence" value="ECO:0007669"/>
    <property type="project" value="TreeGrafter"/>
</dbReference>
<dbReference type="GO" id="GO:0019843">
    <property type="term" value="F:rRNA binding"/>
    <property type="evidence" value="ECO:0007669"/>
    <property type="project" value="UniProtKB-UniRule"/>
</dbReference>
<dbReference type="GO" id="GO:0003735">
    <property type="term" value="F:structural constituent of ribosome"/>
    <property type="evidence" value="ECO:0007669"/>
    <property type="project" value="InterPro"/>
</dbReference>
<dbReference type="GO" id="GO:0006412">
    <property type="term" value="P:translation"/>
    <property type="evidence" value="ECO:0007669"/>
    <property type="project" value="UniProtKB-UniRule"/>
</dbReference>
<dbReference type="Gene3D" id="3.100.10.10">
    <property type="match status" value="1"/>
</dbReference>
<dbReference type="HAMAP" id="MF_01341">
    <property type="entry name" value="Ribosomal_uL15"/>
    <property type="match status" value="1"/>
</dbReference>
<dbReference type="InterPro" id="IPR030878">
    <property type="entry name" value="Ribosomal_uL15"/>
</dbReference>
<dbReference type="InterPro" id="IPR021131">
    <property type="entry name" value="Ribosomal_uL15/eL18"/>
</dbReference>
<dbReference type="InterPro" id="IPR036227">
    <property type="entry name" value="Ribosomal_uL15/eL18_sf"/>
</dbReference>
<dbReference type="InterPro" id="IPR005749">
    <property type="entry name" value="Ribosomal_uL15_bac-type"/>
</dbReference>
<dbReference type="NCBIfam" id="TIGR01071">
    <property type="entry name" value="rplO_bact"/>
    <property type="match status" value="1"/>
</dbReference>
<dbReference type="PANTHER" id="PTHR12934">
    <property type="entry name" value="50S RIBOSOMAL PROTEIN L15"/>
    <property type="match status" value="1"/>
</dbReference>
<dbReference type="PANTHER" id="PTHR12934:SF11">
    <property type="entry name" value="LARGE RIBOSOMAL SUBUNIT PROTEIN UL15M"/>
    <property type="match status" value="1"/>
</dbReference>
<dbReference type="Pfam" id="PF00828">
    <property type="entry name" value="Ribosomal_L27A"/>
    <property type="match status" value="1"/>
</dbReference>
<dbReference type="SUPFAM" id="SSF52080">
    <property type="entry name" value="Ribosomal proteins L15p and L18e"/>
    <property type="match status" value="1"/>
</dbReference>
<feature type="chain" id="PRO_0000251591" description="Large ribosomal subunit protein uL15">
    <location>
        <begin position="1"/>
        <end position="149"/>
    </location>
</feature>
<feature type="region of interest" description="Disordered" evidence="2">
    <location>
        <begin position="30"/>
        <end position="63"/>
    </location>
</feature>
<feature type="compositionally biased region" description="Basic residues" evidence="2">
    <location>
        <begin position="36"/>
        <end position="49"/>
    </location>
</feature>
<evidence type="ECO:0000255" key="1">
    <source>
        <dbReference type="HAMAP-Rule" id="MF_01341"/>
    </source>
</evidence>
<evidence type="ECO:0000256" key="2">
    <source>
        <dbReference type="SAM" id="MobiDB-lite"/>
    </source>
</evidence>
<evidence type="ECO:0000305" key="3"/>
<reference key="1">
    <citation type="journal article" date="2000" name="Nature">
        <title>The genome sequence of the plant pathogen Xylella fastidiosa.</title>
        <authorList>
            <person name="Simpson A.J.G."/>
            <person name="Reinach F.C."/>
            <person name="Arruda P."/>
            <person name="Abreu F.A."/>
            <person name="Acencio M."/>
            <person name="Alvarenga R."/>
            <person name="Alves L.M.C."/>
            <person name="Araya J.E."/>
            <person name="Baia G.S."/>
            <person name="Baptista C.S."/>
            <person name="Barros M.H."/>
            <person name="Bonaccorsi E.D."/>
            <person name="Bordin S."/>
            <person name="Bove J.M."/>
            <person name="Briones M.R.S."/>
            <person name="Bueno M.R.P."/>
            <person name="Camargo A.A."/>
            <person name="Camargo L.E.A."/>
            <person name="Carraro D.M."/>
            <person name="Carrer H."/>
            <person name="Colauto N.B."/>
            <person name="Colombo C."/>
            <person name="Costa F.F."/>
            <person name="Costa M.C.R."/>
            <person name="Costa-Neto C.M."/>
            <person name="Coutinho L.L."/>
            <person name="Cristofani M."/>
            <person name="Dias-Neto E."/>
            <person name="Docena C."/>
            <person name="El-Dorry H."/>
            <person name="Facincani A.P."/>
            <person name="Ferreira A.J.S."/>
            <person name="Ferreira V.C.A."/>
            <person name="Ferro J.A."/>
            <person name="Fraga J.S."/>
            <person name="Franca S.C."/>
            <person name="Franco M.C."/>
            <person name="Frohme M."/>
            <person name="Furlan L.R."/>
            <person name="Garnier M."/>
            <person name="Goldman G.H."/>
            <person name="Goldman M.H.S."/>
            <person name="Gomes S.L."/>
            <person name="Gruber A."/>
            <person name="Ho P.L."/>
            <person name="Hoheisel J.D."/>
            <person name="Junqueira M.L."/>
            <person name="Kemper E.L."/>
            <person name="Kitajima J.P."/>
            <person name="Krieger J.E."/>
            <person name="Kuramae E.E."/>
            <person name="Laigret F."/>
            <person name="Lambais M.R."/>
            <person name="Leite L.C.C."/>
            <person name="Lemos E.G.M."/>
            <person name="Lemos M.V.F."/>
            <person name="Lopes S.A."/>
            <person name="Lopes C.R."/>
            <person name="Machado J.A."/>
            <person name="Machado M.A."/>
            <person name="Madeira A.M.B.N."/>
            <person name="Madeira H.M.F."/>
            <person name="Marino C.L."/>
            <person name="Marques M.V."/>
            <person name="Martins E.A.L."/>
            <person name="Martins E.M.F."/>
            <person name="Matsukuma A.Y."/>
            <person name="Menck C.F.M."/>
            <person name="Miracca E.C."/>
            <person name="Miyaki C.Y."/>
            <person name="Monteiro-Vitorello C.B."/>
            <person name="Moon D.H."/>
            <person name="Nagai M.A."/>
            <person name="Nascimento A.L.T.O."/>
            <person name="Netto L.E.S."/>
            <person name="Nhani A. Jr."/>
            <person name="Nobrega F.G."/>
            <person name="Nunes L.R."/>
            <person name="Oliveira M.A."/>
            <person name="de Oliveira M.C."/>
            <person name="de Oliveira R.C."/>
            <person name="Palmieri D.A."/>
            <person name="Paris A."/>
            <person name="Peixoto B.R."/>
            <person name="Pereira G.A.G."/>
            <person name="Pereira H.A. Jr."/>
            <person name="Pesquero J.B."/>
            <person name="Quaggio R.B."/>
            <person name="Roberto P.G."/>
            <person name="Rodrigues V."/>
            <person name="de Rosa A.J.M."/>
            <person name="de Rosa V.E. Jr."/>
            <person name="de Sa R.G."/>
            <person name="Santelli R.V."/>
            <person name="Sawasaki H.E."/>
            <person name="da Silva A.C.R."/>
            <person name="da Silva A.M."/>
            <person name="da Silva F.R."/>
            <person name="Silva W.A. Jr."/>
            <person name="da Silveira J.F."/>
            <person name="Silvestri M.L.Z."/>
            <person name="Siqueira W.J."/>
            <person name="de Souza A.A."/>
            <person name="de Souza A.P."/>
            <person name="Terenzi M.F."/>
            <person name="Truffi D."/>
            <person name="Tsai S.M."/>
            <person name="Tsuhako M.H."/>
            <person name="Vallada H."/>
            <person name="Van Sluys M.A."/>
            <person name="Verjovski-Almeida S."/>
            <person name="Vettore A.L."/>
            <person name="Zago M.A."/>
            <person name="Zatz M."/>
            <person name="Meidanis J."/>
            <person name="Setubal J.C."/>
        </authorList>
    </citation>
    <scope>NUCLEOTIDE SEQUENCE [LARGE SCALE GENOMIC DNA]</scope>
    <source>
        <strain>9a5c</strain>
    </source>
</reference>